<comment type="function">
    <text evidence="2">Inhibits selectively tetrodotoxin-sensitive voltage-gated sodium channels (Nav). Does not act by binding to receptor site 3 to slow the inactivation kinetics of sodium currents.</text>
</comment>
<comment type="subunit">
    <text evidence="1">Monomer.</text>
</comment>
<comment type="subcellular location">
    <subcellularLocation>
        <location>Secreted</location>
    </subcellularLocation>
</comment>
<comment type="tissue specificity">
    <text>Expressed by the venom gland.</text>
</comment>
<comment type="domain">
    <text evidence="1">The presence of a 'disulfide through disulfide knot' structurally defines this protein as a knottin.</text>
</comment>
<comment type="mass spectrometry"/>
<comment type="miscellaneous">
    <text>IC(50) is 42.3 nM on rat neurons.</text>
</comment>
<comment type="similarity">
    <text evidence="4">Belongs to the neurotoxin 10 (Hwtx-1) family. 22 (Htx-4) subfamily.</text>
</comment>
<keyword id="KW-0903">Direct protein sequencing</keyword>
<keyword id="KW-1015">Disulfide bond</keyword>
<keyword id="KW-0872">Ion channel impairing toxin</keyword>
<keyword id="KW-0960">Knottin</keyword>
<keyword id="KW-0528">Neurotoxin</keyword>
<keyword id="KW-0638">Presynaptic neurotoxin</keyword>
<keyword id="KW-0964">Secreted</keyword>
<keyword id="KW-0800">Toxin</keyword>
<keyword id="KW-0738">Voltage-gated sodium channel impairing toxin</keyword>
<evidence type="ECO:0000250" key="1"/>
<evidence type="ECO:0000269" key="2">
    <source>
    </source>
</evidence>
<evidence type="ECO:0000303" key="3">
    <source>
    </source>
</evidence>
<evidence type="ECO:0000305" key="4"/>
<proteinExistence type="evidence at protein level"/>
<reference key="1">
    <citation type="journal article" date="2003" name="Toxicon">
        <title>Purification and characterization of Hainantoxin-V, a tetrodotoxin-sensitive sodium channel inhibitor from the venom of the spider Selenocosmia hainana.</title>
        <authorList>
            <person name="Xiao Y.-C."/>
            <person name="Liang S.-P."/>
        </authorList>
    </citation>
    <scope>PROTEIN SEQUENCE</scope>
    <scope>FUNCTION</scope>
    <scope>DISULFIDE BONDS</scope>
    <scope>MASS SPECTROMETRY</scope>
    <source>
        <tissue>Venom</tissue>
    </source>
</reference>
<dbReference type="SMR" id="P60975"/>
<dbReference type="ArachnoServer" id="AS000341">
    <property type="toxin name" value="mu-theraphotoxin-Hhn1a"/>
</dbReference>
<dbReference type="GO" id="GO:0005576">
    <property type="term" value="C:extracellular region"/>
    <property type="evidence" value="ECO:0007669"/>
    <property type="project" value="UniProtKB-SubCell"/>
</dbReference>
<dbReference type="GO" id="GO:0044231">
    <property type="term" value="C:host cell presynaptic membrane"/>
    <property type="evidence" value="ECO:0007669"/>
    <property type="project" value="UniProtKB-KW"/>
</dbReference>
<dbReference type="GO" id="GO:0008200">
    <property type="term" value="F:ion channel inhibitor activity"/>
    <property type="evidence" value="ECO:0007669"/>
    <property type="project" value="InterPro"/>
</dbReference>
<dbReference type="GO" id="GO:0017080">
    <property type="term" value="F:sodium channel regulator activity"/>
    <property type="evidence" value="ECO:0007669"/>
    <property type="project" value="UniProtKB-KW"/>
</dbReference>
<dbReference type="GO" id="GO:0090729">
    <property type="term" value="F:toxin activity"/>
    <property type="evidence" value="ECO:0007669"/>
    <property type="project" value="UniProtKB-KW"/>
</dbReference>
<dbReference type="InterPro" id="IPR011696">
    <property type="entry name" value="Huwentoxin-1"/>
</dbReference>
<dbReference type="InterPro" id="IPR013140">
    <property type="entry name" value="Huwentoxin_CS1"/>
</dbReference>
<dbReference type="Pfam" id="PF07740">
    <property type="entry name" value="Toxin_12"/>
    <property type="match status" value="1"/>
</dbReference>
<dbReference type="SUPFAM" id="SSF57059">
    <property type="entry name" value="omega toxin-like"/>
    <property type="match status" value="1"/>
</dbReference>
<dbReference type="PROSITE" id="PS60021">
    <property type="entry name" value="HWTX_1"/>
    <property type="match status" value="1"/>
</dbReference>
<organism>
    <name type="scientific">Cyriopagopus hainanus</name>
    <name type="common">Chinese bird spider</name>
    <name type="synonym">Haplopelma hainanum</name>
    <dbReference type="NCBI Taxonomy" id="209901"/>
    <lineage>
        <taxon>Eukaryota</taxon>
        <taxon>Metazoa</taxon>
        <taxon>Ecdysozoa</taxon>
        <taxon>Arthropoda</taxon>
        <taxon>Chelicerata</taxon>
        <taxon>Arachnida</taxon>
        <taxon>Araneae</taxon>
        <taxon>Mygalomorphae</taxon>
        <taxon>Theraphosidae</taxon>
        <taxon>Haplopelma</taxon>
    </lineage>
</organism>
<protein>
    <recommendedName>
        <fullName>Mu-theraphotoxin-Hhn1a</fullName>
        <shortName>Mu-TRTX-Hhn1a</shortName>
    </recommendedName>
    <alternativeName>
        <fullName evidence="4">Hainantoxin-5</fullName>
    </alternativeName>
    <alternativeName>
        <fullName evidence="3">Hainantoxin-V</fullName>
        <shortName evidence="3">HnTX-V</shortName>
    </alternativeName>
</protein>
<accession>P60975</accession>
<feature type="peptide" id="PRO_0000045007" description="Mu-theraphotoxin-Hhn1a" evidence="2">
    <location>
        <begin position="1"/>
        <end position="35"/>
    </location>
</feature>
<feature type="disulfide bond" evidence="1">
    <location>
        <begin position="2"/>
        <end position="17"/>
    </location>
</feature>
<feature type="disulfide bond" evidence="1">
    <location>
        <begin position="9"/>
        <end position="24"/>
    </location>
</feature>
<feature type="disulfide bond" evidence="1">
    <location>
        <begin position="16"/>
        <end position="31"/>
    </location>
</feature>
<name>TXHA5_CYRHA</name>
<sequence>ECLGFGKGCNPSNDQCCKSANLVCSRKHRWCKYEI</sequence>